<reference key="1">
    <citation type="submission" date="2003-01" db="EMBL/GenBank/DDBJ databases">
        <authorList>
            <consortium name="NIH - Xenopus Gene Collection (XGC) project"/>
        </authorList>
    </citation>
    <scope>NUCLEOTIDE SEQUENCE [LARGE SCALE MRNA]</scope>
    <source>
        <tissue>Embryo</tissue>
    </source>
</reference>
<feature type="chain" id="PRO_0000086732" description="Serine/threonine-protein kinase TAO1-B">
    <location>
        <begin position="1"/>
        <end position="1001"/>
    </location>
</feature>
<feature type="domain" description="Protein kinase" evidence="3">
    <location>
        <begin position="28"/>
        <end position="281"/>
    </location>
</feature>
<feature type="region of interest" description="Disordered" evidence="5">
    <location>
        <begin position="324"/>
        <end position="435"/>
    </location>
</feature>
<feature type="region of interest" description="Disordered" evidence="5">
    <location>
        <begin position="567"/>
        <end position="586"/>
    </location>
</feature>
<feature type="region of interest" description="Disordered" evidence="5">
    <location>
        <begin position="911"/>
        <end position="1001"/>
    </location>
</feature>
<feature type="coiled-coil region" evidence="2">
    <location>
        <begin position="458"/>
        <end position="651"/>
    </location>
</feature>
<feature type="coiled-coil region" evidence="2">
    <location>
        <begin position="754"/>
        <end position="877"/>
    </location>
</feature>
<feature type="compositionally biased region" description="Low complexity" evidence="5">
    <location>
        <begin position="350"/>
        <end position="370"/>
    </location>
</feature>
<feature type="compositionally biased region" description="Basic and acidic residues" evidence="5">
    <location>
        <begin position="375"/>
        <end position="388"/>
    </location>
</feature>
<feature type="compositionally biased region" description="Basic and acidic residues" evidence="5">
    <location>
        <begin position="577"/>
        <end position="586"/>
    </location>
</feature>
<feature type="compositionally biased region" description="Low complexity" evidence="5">
    <location>
        <begin position="921"/>
        <end position="930"/>
    </location>
</feature>
<feature type="compositionally biased region" description="Polar residues" evidence="5">
    <location>
        <begin position="949"/>
        <end position="967"/>
    </location>
</feature>
<feature type="compositionally biased region" description="Polar residues" evidence="5">
    <location>
        <begin position="975"/>
        <end position="1001"/>
    </location>
</feature>
<feature type="active site" description="Proton acceptor" evidence="3 4">
    <location>
        <position position="151"/>
    </location>
</feature>
<feature type="binding site" evidence="3">
    <location>
        <begin position="34"/>
        <end position="42"/>
    </location>
    <ligand>
        <name>ATP</name>
        <dbReference type="ChEBI" id="CHEBI:30616"/>
    </ligand>
</feature>
<feature type="binding site" evidence="3">
    <location>
        <position position="57"/>
    </location>
    <ligand>
        <name>ATP</name>
        <dbReference type="ChEBI" id="CHEBI:30616"/>
    </ligand>
</feature>
<organism>
    <name type="scientific">Xenopus laevis</name>
    <name type="common">African clawed frog</name>
    <dbReference type="NCBI Taxonomy" id="8355"/>
    <lineage>
        <taxon>Eukaryota</taxon>
        <taxon>Metazoa</taxon>
        <taxon>Chordata</taxon>
        <taxon>Craniata</taxon>
        <taxon>Vertebrata</taxon>
        <taxon>Euteleostomi</taxon>
        <taxon>Amphibia</taxon>
        <taxon>Batrachia</taxon>
        <taxon>Anura</taxon>
        <taxon>Pipoidea</taxon>
        <taxon>Pipidae</taxon>
        <taxon>Xenopodinae</taxon>
        <taxon>Xenopus</taxon>
        <taxon>Xenopus</taxon>
    </lineage>
</organism>
<comment type="function">
    <text evidence="1">Serine/threonine-protein kinase involved in various processes such as p38/mapk14 stress-activated MAPK cascade, DNA damage response and regulation of cytoskeleton stability. Acts as an activator of the p38/MAPK14 stress-activated MAPK cascade by mediating phosphorylation and subsequent activation of upstream MAP kinase kinases. In response to DNA damage, involved in the G2/M transition DNA damage checkpoint by activating the p38/MAPK14 stress-activated MAPK cascade (By similarity).</text>
</comment>
<comment type="catalytic activity">
    <reaction>
        <text>L-seryl-[protein] + ATP = O-phospho-L-seryl-[protein] + ADP + H(+)</text>
        <dbReference type="Rhea" id="RHEA:17989"/>
        <dbReference type="Rhea" id="RHEA-COMP:9863"/>
        <dbReference type="Rhea" id="RHEA-COMP:11604"/>
        <dbReference type="ChEBI" id="CHEBI:15378"/>
        <dbReference type="ChEBI" id="CHEBI:29999"/>
        <dbReference type="ChEBI" id="CHEBI:30616"/>
        <dbReference type="ChEBI" id="CHEBI:83421"/>
        <dbReference type="ChEBI" id="CHEBI:456216"/>
        <dbReference type="EC" id="2.7.11.1"/>
    </reaction>
</comment>
<comment type="catalytic activity">
    <reaction>
        <text>L-threonyl-[protein] + ATP = O-phospho-L-threonyl-[protein] + ADP + H(+)</text>
        <dbReference type="Rhea" id="RHEA:46608"/>
        <dbReference type="Rhea" id="RHEA-COMP:11060"/>
        <dbReference type="Rhea" id="RHEA-COMP:11605"/>
        <dbReference type="ChEBI" id="CHEBI:15378"/>
        <dbReference type="ChEBI" id="CHEBI:30013"/>
        <dbReference type="ChEBI" id="CHEBI:30616"/>
        <dbReference type="ChEBI" id="CHEBI:61977"/>
        <dbReference type="ChEBI" id="CHEBI:456216"/>
        <dbReference type="EC" id="2.7.11.1"/>
    </reaction>
</comment>
<comment type="subcellular location">
    <subcellularLocation>
        <location evidence="1">Cytoplasm</location>
    </subcellularLocation>
</comment>
<comment type="similarity">
    <text evidence="6">Belongs to the protein kinase superfamily. STE Ser/Thr protein kinase family. STE20 subfamily.</text>
</comment>
<gene>
    <name type="primary">taok1-b</name>
</gene>
<evidence type="ECO:0000250" key="1"/>
<evidence type="ECO:0000255" key="2"/>
<evidence type="ECO:0000255" key="3">
    <source>
        <dbReference type="PROSITE-ProRule" id="PRU00159"/>
    </source>
</evidence>
<evidence type="ECO:0000255" key="4">
    <source>
        <dbReference type="PROSITE-ProRule" id="PRU10027"/>
    </source>
</evidence>
<evidence type="ECO:0000256" key="5">
    <source>
        <dbReference type="SAM" id="MobiDB-lite"/>
    </source>
</evidence>
<evidence type="ECO:0000305" key="6"/>
<keyword id="KW-0067">ATP-binding</keyword>
<keyword id="KW-0131">Cell cycle</keyword>
<keyword id="KW-0132">Cell division</keyword>
<keyword id="KW-0175">Coiled coil</keyword>
<keyword id="KW-0963">Cytoplasm</keyword>
<keyword id="KW-0227">DNA damage</keyword>
<keyword id="KW-0234">DNA repair</keyword>
<keyword id="KW-0418">Kinase</keyword>
<keyword id="KW-0547">Nucleotide-binding</keyword>
<keyword id="KW-1185">Reference proteome</keyword>
<keyword id="KW-0723">Serine/threonine-protein kinase</keyword>
<keyword id="KW-0808">Transferase</keyword>
<protein>
    <recommendedName>
        <fullName>Serine/threonine-protein kinase TAO1-B</fullName>
        <ecNumber>2.7.11.1</ecNumber>
    </recommendedName>
    <alternativeName>
        <fullName>Thousand and one amino acid protein 1-B</fullName>
    </alternativeName>
</protein>
<dbReference type="EC" id="2.7.11.1"/>
<dbReference type="EMBL" id="BC043764">
    <property type="protein sequence ID" value="AAH43764.1"/>
    <property type="molecule type" value="mRNA"/>
</dbReference>
<dbReference type="RefSeq" id="NP_001079478.1">
    <property type="nucleotide sequence ID" value="NM_001086009.1"/>
</dbReference>
<dbReference type="RefSeq" id="XP_018103492.1">
    <property type="nucleotide sequence ID" value="XM_018248003.1"/>
</dbReference>
<dbReference type="SMR" id="Q7ZYJ0"/>
<dbReference type="DNASU" id="379165"/>
<dbReference type="GeneID" id="379165"/>
<dbReference type="KEGG" id="xla:379165"/>
<dbReference type="AGR" id="Xenbase:XB-GENE-956115"/>
<dbReference type="CTD" id="379165"/>
<dbReference type="Xenbase" id="XB-GENE-956115">
    <property type="gene designation" value="taok1.S"/>
</dbReference>
<dbReference type="OMA" id="XAKVMAN"/>
<dbReference type="OrthoDB" id="10016527at2759"/>
<dbReference type="Proteomes" id="UP000186698">
    <property type="component" value="Chromosome 2S"/>
</dbReference>
<dbReference type="Bgee" id="379165">
    <property type="expression patterns" value="Expressed in blastula and 18 other cell types or tissues"/>
</dbReference>
<dbReference type="GO" id="GO:0005737">
    <property type="term" value="C:cytoplasm"/>
    <property type="evidence" value="ECO:0000318"/>
    <property type="project" value="GO_Central"/>
</dbReference>
<dbReference type="GO" id="GO:0005524">
    <property type="term" value="F:ATP binding"/>
    <property type="evidence" value="ECO:0007669"/>
    <property type="project" value="UniProtKB-KW"/>
</dbReference>
<dbReference type="GO" id="GO:0106310">
    <property type="term" value="F:protein serine kinase activity"/>
    <property type="evidence" value="ECO:0007669"/>
    <property type="project" value="RHEA"/>
</dbReference>
<dbReference type="GO" id="GO:0004674">
    <property type="term" value="F:protein serine/threonine kinase activity"/>
    <property type="evidence" value="ECO:0000250"/>
    <property type="project" value="UniProtKB"/>
</dbReference>
<dbReference type="GO" id="GO:0051301">
    <property type="term" value="P:cell division"/>
    <property type="evidence" value="ECO:0007669"/>
    <property type="project" value="UniProtKB-KW"/>
</dbReference>
<dbReference type="GO" id="GO:0006974">
    <property type="term" value="P:DNA damage response"/>
    <property type="evidence" value="ECO:0000250"/>
    <property type="project" value="UniProtKB"/>
</dbReference>
<dbReference type="GO" id="GO:0006281">
    <property type="term" value="P:DNA repair"/>
    <property type="evidence" value="ECO:0007669"/>
    <property type="project" value="UniProtKB-KW"/>
</dbReference>
<dbReference type="GO" id="GO:0097194">
    <property type="term" value="P:execution phase of apoptosis"/>
    <property type="evidence" value="ECO:0000250"/>
    <property type="project" value="UniProtKB"/>
</dbReference>
<dbReference type="GO" id="GO:0007095">
    <property type="term" value="P:mitotic G2 DNA damage checkpoint signaling"/>
    <property type="evidence" value="ECO:0000250"/>
    <property type="project" value="UniProtKB"/>
</dbReference>
<dbReference type="GO" id="GO:0046330">
    <property type="term" value="P:positive regulation of JNK cascade"/>
    <property type="evidence" value="ECO:0000250"/>
    <property type="project" value="UniProtKB"/>
</dbReference>
<dbReference type="GO" id="GO:0032874">
    <property type="term" value="P:positive regulation of stress-activated MAPK cascade"/>
    <property type="evidence" value="ECO:0000250"/>
    <property type="project" value="UniProtKB"/>
</dbReference>
<dbReference type="GO" id="GO:0051493">
    <property type="term" value="P:regulation of cytoskeleton organization"/>
    <property type="evidence" value="ECO:0000250"/>
    <property type="project" value="UniProtKB"/>
</dbReference>
<dbReference type="CDD" id="cd06635">
    <property type="entry name" value="STKc_TAO1"/>
    <property type="match status" value="1"/>
</dbReference>
<dbReference type="FunFam" id="1.10.510.10:FF:000030">
    <property type="entry name" value="Serine/threonine-protein kinase TAO2, putative"/>
    <property type="match status" value="1"/>
</dbReference>
<dbReference type="FunFam" id="3.30.200.20:FF:000029">
    <property type="entry name" value="Serine/threonine-protein kinase TAO2, putative"/>
    <property type="match status" value="1"/>
</dbReference>
<dbReference type="Gene3D" id="3.30.200.20">
    <property type="entry name" value="Phosphorylase Kinase, domain 1"/>
    <property type="match status" value="1"/>
</dbReference>
<dbReference type="Gene3D" id="1.10.510.10">
    <property type="entry name" value="Transferase(Phosphotransferase) domain 1"/>
    <property type="match status" value="1"/>
</dbReference>
<dbReference type="InterPro" id="IPR011009">
    <property type="entry name" value="Kinase-like_dom_sf"/>
</dbReference>
<dbReference type="InterPro" id="IPR000719">
    <property type="entry name" value="Prot_kinase_dom"/>
</dbReference>
<dbReference type="InterPro" id="IPR017441">
    <property type="entry name" value="Protein_kinase_ATP_BS"/>
</dbReference>
<dbReference type="InterPro" id="IPR008271">
    <property type="entry name" value="Ser/Thr_kinase_AS"/>
</dbReference>
<dbReference type="InterPro" id="IPR051234">
    <property type="entry name" value="TAO_STE20_kinase"/>
</dbReference>
<dbReference type="PANTHER" id="PTHR47167">
    <property type="entry name" value="SERINE/THREONINE-PROTEIN KINASE TAO1-LIKE PROTEIN"/>
    <property type="match status" value="1"/>
</dbReference>
<dbReference type="PANTHER" id="PTHR47167:SF8">
    <property type="entry name" value="SERINE_THREONINE-PROTEIN KINASE TAO1"/>
    <property type="match status" value="1"/>
</dbReference>
<dbReference type="Pfam" id="PF00069">
    <property type="entry name" value="Pkinase"/>
    <property type="match status" value="1"/>
</dbReference>
<dbReference type="SMART" id="SM00220">
    <property type="entry name" value="S_TKc"/>
    <property type="match status" value="1"/>
</dbReference>
<dbReference type="SUPFAM" id="SSF56112">
    <property type="entry name" value="Protein kinase-like (PK-like)"/>
    <property type="match status" value="1"/>
</dbReference>
<dbReference type="PROSITE" id="PS00107">
    <property type="entry name" value="PROTEIN_KINASE_ATP"/>
    <property type="match status" value="1"/>
</dbReference>
<dbReference type="PROSITE" id="PS50011">
    <property type="entry name" value="PROTEIN_KINASE_DOM"/>
    <property type="match status" value="1"/>
</dbReference>
<dbReference type="PROSITE" id="PS00108">
    <property type="entry name" value="PROTEIN_KINASE_ST"/>
    <property type="match status" value="1"/>
</dbReference>
<accession>Q7ZYJ0</accession>
<sequence length="1001" mass="116036">MPSTSRAGSLKDPDVAELFFRDDPEKLFSDLREIGHGSFGAVYFAHDARTSEVVAIKKMSYSGKQSNEKWQDIIKEVKFLQRIQHPNSIEYKGCYLREHTAWLVMEYCLGSASDLLEVHKKPLQEIEIAAITHGALQGLAYLHSHNLIHRDIKAGNILLTEPGQVKLADFGSASIVSPANSFVGTPYWMAPEVILAMDEGQYDGKVDVWSLGITCVELAERKPPLFNMNAMSALYHIAQNESPTLQSTEWSDYFRNFVDSCLHKIPQDRPTSDELLKHMFVLRERPETVLIDLIQRTKDAVRELDNLQYRKMKKLLFQEAHNGPAVETQEEDEEQEHGVGRTGTVNSIGSNQSIPSMSISASSQSSSVNSLPDASDDKSELDMMEGDHTVMSNSSVIHLKPEEENYPEEPDPRTRPSEPQSPPQVSRHKSHYRNREHFATIRTASLVTRQIQEHEQDSELREQMSGYKRMRRQHQKQLMALENKLKAEMDEHRLRLDKDLETQRNNFAAEIEKLVKKHQAAMEKELKLMANEEKKFQQHIQAQQKKELNSFLESQKREYKLRKEQLKEELNENQSTPKKEKQEWLSKQKENFQHFQAEEEANLLRRQRQYLELECRRFKRRMLLSRHNLEQDLVREELNKRQTQKDLEHAMLLRQHESMQELEFRHLNTIQRMRCELIKLQHQTELTNQLEYNKRRERELRRKHVMEVRQQPKSLKSKELQIKKQFQDTCKIQTRQYKALRNHLLKSTPKNEHKAVLKRLKEEQTRKLAILAEQYDHSINEMLSTQALRLDEAQEAECQVLKMQLQQELELLNAYQSKIKMQAEAQHEREIRELEQRVSLRRALLEQKIEEEMLALQNERTERIRSLLERQAREIEAFDSESMRLGFSNMILSNLSPEAFSHSYPGASGWSHNPTGGPGPHWGHPMAGPPQAWGHPMQGGPQPWGHPSGSVQGVSRGSTMGVRNSPQALRRTASGGRTEQGMSRSTSVTSQISNGSHMSYT</sequence>
<proteinExistence type="evidence at transcript level"/>
<name>TAO1B_XENLA</name>